<name>RIMP_VIBCH</name>
<evidence type="ECO:0000255" key="1">
    <source>
        <dbReference type="HAMAP-Rule" id="MF_01077"/>
    </source>
</evidence>
<keyword id="KW-0963">Cytoplasm</keyword>
<keyword id="KW-1185">Reference proteome</keyword>
<keyword id="KW-0690">Ribosome biogenesis</keyword>
<accession>Q9KU82</accession>
<feature type="chain" id="PRO_0000181949" description="Ribosome maturation factor RimP">
    <location>
        <begin position="1"/>
        <end position="151"/>
    </location>
</feature>
<proteinExistence type="inferred from homology"/>
<gene>
    <name evidence="1" type="primary">rimP</name>
    <name type="ordered locus">VC_0641</name>
</gene>
<comment type="function">
    <text evidence="1">Required for maturation of 30S ribosomal subunits.</text>
</comment>
<comment type="subcellular location">
    <subcellularLocation>
        <location evidence="1">Cytoplasm</location>
    </subcellularLocation>
</comment>
<comment type="similarity">
    <text evidence="1">Belongs to the RimP family.</text>
</comment>
<protein>
    <recommendedName>
        <fullName evidence="1">Ribosome maturation factor RimP</fullName>
    </recommendedName>
</protein>
<organism>
    <name type="scientific">Vibrio cholerae serotype O1 (strain ATCC 39315 / El Tor Inaba N16961)</name>
    <dbReference type="NCBI Taxonomy" id="243277"/>
    <lineage>
        <taxon>Bacteria</taxon>
        <taxon>Pseudomonadati</taxon>
        <taxon>Pseudomonadota</taxon>
        <taxon>Gammaproteobacteria</taxon>
        <taxon>Vibrionales</taxon>
        <taxon>Vibrionaceae</taxon>
        <taxon>Vibrio</taxon>
    </lineage>
</organism>
<dbReference type="EMBL" id="AE003852">
    <property type="protein sequence ID" value="AAF93807.1"/>
    <property type="molecule type" value="Genomic_DNA"/>
</dbReference>
<dbReference type="PIR" id="G82297">
    <property type="entry name" value="G82297"/>
</dbReference>
<dbReference type="RefSeq" id="NP_230290.1">
    <property type="nucleotide sequence ID" value="NC_002505.1"/>
</dbReference>
<dbReference type="RefSeq" id="WP_000147148.1">
    <property type="nucleotide sequence ID" value="NZ_LT906614.1"/>
</dbReference>
<dbReference type="SMR" id="Q9KU82"/>
<dbReference type="STRING" id="243277.VC_0641"/>
<dbReference type="DNASU" id="2615431"/>
<dbReference type="EnsemblBacteria" id="AAF93807">
    <property type="protein sequence ID" value="AAF93807"/>
    <property type="gene ID" value="VC_0641"/>
</dbReference>
<dbReference type="GeneID" id="69720603"/>
<dbReference type="KEGG" id="vch:VC_0641"/>
<dbReference type="PATRIC" id="fig|243277.26.peg.611"/>
<dbReference type="eggNOG" id="COG0779">
    <property type="taxonomic scope" value="Bacteria"/>
</dbReference>
<dbReference type="HOGENOM" id="CLU_070525_1_1_6"/>
<dbReference type="Proteomes" id="UP000000584">
    <property type="component" value="Chromosome 1"/>
</dbReference>
<dbReference type="GO" id="GO:0005829">
    <property type="term" value="C:cytosol"/>
    <property type="evidence" value="ECO:0000318"/>
    <property type="project" value="GO_Central"/>
</dbReference>
<dbReference type="GO" id="GO:0000028">
    <property type="term" value="P:ribosomal small subunit assembly"/>
    <property type="evidence" value="ECO:0000318"/>
    <property type="project" value="GO_Central"/>
</dbReference>
<dbReference type="GO" id="GO:0006412">
    <property type="term" value="P:translation"/>
    <property type="evidence" value="ECO:0000318"/>
    <property type="project" value="GO_Central"/>
</dbReference>
<dbReference type="CDD" id="cd01734">
    <property type="entry name" value="YlxS_C"/>
    <property type="match status" value="1"/>
</dbReference>
<dbReference type="FunFam" id="2.30.30.180:FF:000001">
    <property type="entry name" value="Ribosome maturation factor RimP"/>
    <property type="match status" value="1"/>
</dbReference>
<dbReference type="FunFam" id="3.30.300.70:FF:000001">
    <property type="entry name" value="Ribosome maturation factor RimP"/>
    <property type="match status" value="1"/>
</dbReference>
<dbReference type="Gene3D" id="2.30.30.180">
    <property type="entry name" value="Ribosome maturation factor RimP, C-terminal domain"/>
    <property type="match status" value="1"/>
</dbReference>
<dbReference type="Gene3D" id="3.30.300.70">
    <property type="entry name" value="RimP-like superfamily, N-terminal"/>
    <property type="match status" value="1"/>
</dbReference>
<dbReference type="HAMAP" id="MF_01077">
    <property type="entry name" value="RimP"/>
    <property type="match status" value="1"/>
</dbReference>
<dbReference type="InterPro" id="IPR003728">
    <property type="entry name" value="Ribosome_maturation_RimP"/>
</dbReference>
<dbReference type="InterPro" id="IPR028998">
    <property type="entry name" value="RimP_C"/>
</dbReference>
<dbReference type="InterPro" id="IPR036847">
    <property type="entry name" value="RimP_C_sf"/>
</dbReference>
<dbReference type="InterPro" id="IPR028989">
    <property type="entry name" value="RimP_N"/>
</dbReference>
<dbReference type="InterPro" id="IPR035956">
    <property type="entry name" value="RimP_N_sf"/>
</dbReference>
<dbReference type="NCBIfam" id="NF000927">
    <property type="entry name" value="PRK00092.1-1"/>
    <property type="match status" value="1"/>
</dbReference>
<dbReference type="PANTHER" id="PTHR33867">
    <property type="entry name" value="RIBOSOME MATURATION FACTOR RIMP"/>
    <property type="match status" value="1"/>
</dbReference>
<dbReference type="PANTHER" id="PTHR33867:SF1">
    <property type="entry name" value="RIBOSOME MATURATION FACTOR RIMP"/>
    <property type="match status" value="1"/>
</dbReference>
<dbReference type="Pfam" id="PF17384">
    <property type="entry name" value="DUF150_C"/>
    <property type="match status" value="1"/>
</dbReference>
<dbReference type="Pfam" id="PF02576">
    <property type="entry name" value="RimP_N"/>
    <property type="match status" value="1"/>
</dbReference>
<dbReference type="SUPFAM" id="SSF74942">
    <property type="entry name" value="YhbC-like, C-terminal domain"/>
    <property type="match status" value="1"/>
</dbReference>
<dbReference type="SUPFAM" id="SSF75420">
    <property type="entry name" value="YhbC-like, N-terminal domain"/>
    <property type="match status" value="1"/>
</dbReference>
<reference key="1">
    <citation type="journal article" date="2000" name="Nature">
        <title>DNA sequence of both chromosomes of the cholera pathogen Vibrio cholerae.</title>
        <authorList>
            <person name="Heidelberg J.F."/>
            <person name="Eisen J.A."/>
            <person name="Nelson W.C."/>
            <person name="Clayton R.A."/>
            <person name="Gwinn M.L."/>
            <person name="Dodson R.J."/>
            <person name="Haft D.H."/>
            <person name="Hickey E.K."/>
            <person name="Peterson J.D."/>
            <person name="Umayam L.A."/>
            <person name="Gill S.R."/>
            <person name="Nelson K.E."/>
            <person name="Read T.D."/>
            <person name="Tettelin H."/>
            <person name="Richardson D.L."/>
            <person name="Ermolaeva M.D."/>
            <person name="Vamathevan J.J."/>
            <person name="Bass S."/>
            <person name="Qin H."/>
            <person name="Dragoi I."/>
            <person name="Sellers P."/>
            <person name="McDonald L.A."/>
            <person name="Utterback T.R."/>
            <person name="Fleischmann R.D."/>
            <person name="Nierman W.C."/>
            <person name="White O."/>
            <person name="Salzberg S.L."/>
            <person name="Smith H.O."/>
            <person name="Colwell R.R."/>
            <person name="Mekalanos J.J."/>
            <person name="Venter J.C."/>
            <person name="Fraser C.M."/>
        </authorList>
    </citation>
    <scope>NUCLEOTIDE SEQUENCE [LARGE SCALE GENOMIC DNA]</scope>
    <source>
        <strain>ATCC 39315 / El Tor Inaba N16961</strain>
    </source>
</reference>
<sequence length="151" mass="16677">MTGLERQLTEMLEAPVVAAGYELVGLEFVRAGQHSTLRIFIDHENGITVEDCAEVSRQVSAVLDVEDPISVVYNLEVSSPGLERPLFKAAHYEQFIGHEVSIVLKMAVGNRRKWKGVIQSIDGETVAVMVDGQEEHFALSNISKANLIPKF</sequence>